<feature type="chain" id="PRO_0000441707" description="Phenazine-1-carboxylate N-methyltransferase">
    <location>
        <begin position="1"/>
        <end position="334"/>
    </location>
</feature>
<feature type="binding site" evidence="1">
    <location>
        <position position="198"/>
    </location>
    <ligand>
        <name>S-adenosyl-L-methionine</name>
        <dbReference type="ChEBI" id="CHEBI:59789"/>
    </ligand>
</feature>
<feature type="binding site" evidence="1">
    <location>
        <position position="241"/>
    </location>
    <ligand>
        <name>S-adenosyl-L-methionine</name>
        <dbReference type="ChEBI" id="CHEBI:59789"/>
    </ligand>
</feature>
<feature type="helix" evidence="8">
    <location>
        <begin position="6"/>
        <end position="30"/>
    </location>
</feature>
<feature type="helix" evidence="8">
    <location>
        <begin position="33"/>
        <end position="38"/>
    </location>
</feature>
<feature type="helix" evidence="8">
    <location>
        <begin position="44"/>
        <end position="51"/>
    </location>
</feature>
<feature type="helix" evidence="8">
    <location>
        <begin position="55"/>
        <end position="67"/>
    </location>
</feature>
<feature type="strand" evidence="8">
    <location>
        <begin position="70"/>
        <end position="74"/>
    </location>
</feature>
<feature type="turn" evidence="8">
    <location>
        <begin position="75"/>
        <end position="77"/>
    </location>
</feature>
<feature type="strand" evidence="8">
    <location>
        <begin position="78"/>
        <end position="81"/>
    </location>
</feature>
<feature type="helix" evidence="8">
    <location>
        <begin position="83"/>
        <end position="86"/>
    </location>
</feature>
<feature type="strand" evidence="8">
    <location>
        <begin position="89"/>
        <end position="91"/>
    </location>
</feature>
<feature type="helix" evidence="8">
    <location>
        <begin position="96"/>
        <end position="102"/>
    </location>
</feature>
<feature type="helix" evidence="8">
    <location>
        <begin position="105"/>
        <end position="109"/>
    </location>
</feature>
<feature type="turn" evidence="8">
    <location>
        <begin position="110"/>
        <end position="112"/>
    </location>
</feature>
<feature type="helix" evidence="8">
    <location>
        <begin position="113"/>
        <end position="119"/>
    </location>
</feature>
<feature type="helix" evidence="8">
    <location>
        <begin position="123"/>
        <end position="128"/>
    </location>
</feature>
<feature type="helix" evidence="8">
    <location>
        <begin position="132"/>
        <end position="138"/>
    </location>
</feature>
<feature type="helix" evidence="8">
    <location>
        <begin position="140"/>
        <end position="150"/>
    </location>
</feature>
<feature type="helix" evidence="8">
    <location>
        <begin position="151"/>
        <end position="153"/>
    </location>
</feature>
<feature type="helix" evidence="8">
    <location>
        <begin position="154"/>
        <end position="163"/>
    </location>
</feature>
<feature type="strand" evidence="8">
    <location>
        <begin position="170"/>
        <end position="174"/>
    </location>
</feature>
<feature type="helix" evidence="8">
    <location>
        <begin position="180"/>
        <end position="188"/>
    </location>
</feature>
<feature type="strand" evidence="8">
    <location>
        <begin position="193"/>
        <end position="198"/>
    </location>
</feature>
<feature type="helix" evidence="8">
    <location>
        <begin position="204"/>
        <end position="209"/>
    </location>
</feature>
<feature type="helix" evidence="8">
    <location>
        <begin position="211"/>
        <end position="215"/>
    </location>
</feature>
<feature type="strand" evidence="8">
    <location>
        <begin position="218"/>
        <end position="224"/>
    </location>
</feature>
<feature type="turn" evidence="8">
    <location>
        <begin position="226"/>
        <end position="228"/>
    </location>
</feature>
<feature type="strand" evidence="8">
    <location>
        <begin position="235"/>
        <end position="241"/>
    </location>
</feature>
<feature type="helix" evidence="8">
    <location>
        <begin position="243"/>
        <end position="245"/>
    </location>
</feature>
<feature type="helix" evidence="8">
    <location>
        <begin position="248"/>
        <end position="261"/>
    </location>
</feature>
<feature type="strand" evidence="8">
    <location>
        <begin position="267"/>
        <end position="272"/>
    </location>
</feature>
<feature type="strand" evidence="8">
    <location>
        <begin position="277"/>
        <end position="279"/>
    </location>
</feature>
<feature type="helix" evidence="8">
    <location>
        <begin position="282"/>
        <end position="295"/>
    </location>
</feature>
<feature type="helix" evidence="8">
    <location>
        <begin position="302"/>
        <end position="311"/>
    </location>
</feature>
<feature type="strand" evidence="8">
    <location>
        <begin position="314"/>
        <end position="322"/>
    </location>
</feature>
<feature type="turn" evidence="8">
    <location>
        <begin position="323"/>
        <end position="325"/>
    </location>
</feature>
<feature type="strand" evidence="8">
    <location>
        <begin position="326"/>
        <end position="333"/>
    </location>
</feature>
<protein>
    <recommendedName>
        <fullName evidence="5">Phenazine-1-carboxylate N-methyltransferase</fullName>
        <ecNumber evidence="3">2.1.1.327</ecNumber>
    </recommendedName>
</protein>
<gene>
    <name evidence="4" type="primary">phzM</name>
    <name evidence="6" type="ordered locus">PA4209</name>
</gene>
<dbReference type="EC" id="2.1.1.327" evidence="3"/>
<dbReference type="EMBL" id="AE004091">
    <property type="protein sequence ID" value="AAG07596.1"/>
    <property type="molecule type" value="Genomic_DNA"/>
</dbReference>
<dbReference type="PIR" id="F83120">
    <property type="entry name" value="F83120"/>
</dbReference>
<dbReference type="RefSeq" id="NP_252898.1">
    <property type="nucleotide sequence ID" value="NC_002516.2"/>
</dbReference>
<dbReference type="RefSeq" id="WP_003093617.1">
    <property type="nucleotide sequence ID" value="NZ_QZGE01000013.1"/>
</dbReference>
<dbReference type="PDB" id="2IP2">
    <property type="method" value="X-ray"/>
    <property type="resolution" value="1.80 A"/>
    <property type="chains" value="A/B=1-334"/>
</dbReference>
<dbReference type="PDBsum" id="2IP2"/>
<dbReference type="SMR" id="Q9HWH2"/>
<dbReference type="STRING" id="208964.PA4209"/>
<dbReference type="PaxDb" id="208964-PA4209"/>
<dbReference type="DNASU" id="880514"/>
<dbReference type="GeneID" id="880514"/>
<dbReference type="KEGG" id="pae:PA4209"/>
<dbReference type="PATRIC" id="fig|208964.12.peg.4409"/>
<dbReference type="PseudoCAP" id="PA4209"/>
<dbReference type="HOGENOM" id="CLU_005533_12_0_6"/>
<dbReference type="InParanoid" id="Q9HWH2"/>
<dbReference type="OrthoDB" id="9766840at2"/>
<dbReference type="PhylomeDB" id="Q9HWH2"/>
<dbReference type="BioCyc" id="MetaCyc:MONOMER-16021"/>
<dbReference type="BioCyc" id="PAER208964:G1FZ6-4282-MONOMER"/>
<dbReference type="BRENDA" id="2.1.1.327">
    <property type="organism ID" value="5087"/>
</dbReference>
<dbReference type="UniPathway" id="UPA00235"/>
<dbReference type="EvolutionaryTrace" id="Q9HWH2"/>
<dbReference type="PHI-base" id="PHI:7390"/>
<dbReference type="Proteomes" id="UP000002438">
    <property type="component" value="Chromosome"/>
</dbReference>
<dbReference type="GO" id="GO:0102168">
    <property type="term" value="F:5-methyl-phenazine-1-carboxylate N-methyltransferase activity"/>
    <property type="evidence" value="ECO:0000314"/>
    <property type="project" value="UniProtKB"/>
</dbReference>
<dbReference type="GO" id="GO:0042802">
    <property type="term" value="F:identical protein binding"/>
    <property type="evidence" value="ECO:0000314"/>
    <property type="project" value="UniProtKB"/>
</dbReference>
<dbReference type="GO" id="GO:0008171">
    <property type="term" value="F:O-methyltransferase activity"/>
    <property type="evidence" value="ECO:0007669"/>
    <property type="project" value="InterPro"/>
</dbReference>
<dbReference type="GO" id="GO:0042803">
    <property type="term" value="F:protein homodimerization activity"/>
    <property type="evidence" value="ECO:0000314"/>
    <property type="project" value="UniProtKB"/>
</dbReference>
<dbReference type="GO" id="GO:1904047">
    <property type="term" value="F:S-adenosyl-L-methionine binding"/>
    <property type="evidence" value="ECO:0000314"/>
    <property type="project" value="UniProtKB"/>
</dbReference>
<dbReference type="GO" id="GO:0008757">
    <property type="term" value="F:S-adenosylmethionine-dependent methyltransferase activity"/>
    <property type="evidence" value="ECO:0000314"/>
    <property type="project" value="PseudoCAP"/>
</dbReference>
<dbReference type="GO" id="GO:0032259">
    <property type="term" value="P:methylation"/>
    <property type="evidence" value="ECO:0007669"/>
    <property type="project" value="UniProtKB-KW"/>
</dbReference>
<dbReference type="GO" id="GO:0106220">
    <property type="term" value="P:pyocyanine biosynthetic process"/>
    <property type="evidence" value="ECO:0000314"/>
    <property type="project" value="UniProtKB"/>
</dbReference>
<dbReference type="Gene3D" id="3.40.50.150">
    <property type="entry name" value="Vaccinia Virus protein VP39"/>
    <property type="match status" value="1"/>
</dbReference>
<dbReference type="Gene3D" id="1.10.10.10">
    <property type="entry name" value="Winged helix-like DNA-binding domain superfamily/Winged helix DNA-binding domain"/>
    <property type="match status" value="1"/>
</dbReference>
<dbReference type="InterPro" id="IPR016461">
    <property type="entry name" value="COMT-like"/>
</dbReference>
<dbReference type="InterPro" id="IPR001077">
    <property type="entry name" value="O_MeTrfase_dom"/>
</dbReference>
<dbReference type="InterPro" id="IPR012967">
    <property type="entry name" value="Plant_O-MeTrfase_dimerisation"/>
</dbReference>
<dbReference type="InterPro" id="IPR029063">
    <property type="entry name" value="SAM-dependent_MTases_sf"/>
</dbReference>
<dbReference type="InterPro" id="IPR036388">
    <property type="entry name" value="WH-like_DNA-bd_sf"/>
</dbReference>
<dbReference type="InterPro" id="IPR036390">
    <property type="entry name" value="WH_DNA-bd_sf"/>
</dbReference>
<dbReference type="PANTHER" id="PTHR43712:SF2">
    <property type="entry name" value="O-METHYLTRANSFERASE CICE"/>
    <property type="match status" value="1"/>
</dbReference>
<dbReference type="PANTHER" id="PTHR43712">
    <property type="entry name" value="PUTATIVE (AFU_ORTHOLOGUE AFUA_4G14580)-RELATED"/>
    <property type="match status" value="1"/>
</dbReference>
<dbReference type="Pfam" id="PF08100">
    <property type="entry name" value="Dimerisation"/>
    <property type="match status" value="1"/>
</dbReference>
<dbReference type="Pfam" id="PF00891">
    <property type="entry name" value="Methyltransf_2"/>
    <property type="match status" value="1"/>
</dbReference>
<dbReference type="PIRSF" id="PIRSF005739">
    <property type="entry name" value="O-mtase"/>
    <property type="match status" value="1"/>
</dbReference>
<dbReference type="SUPFAM" id="SSF53335">
    <property type="entry name" value="S-adenosyl-L-methionine-dependent methyltransferases"/>
    <property type="match status" value="1"/>
</dbReference>
<dbReference type="SUPFAM" id="SSF46785">
    <property type="entry name" value="Winged helix' DNA-binding domain"/>
    <property type="match status" value="1"/>
</dbReference>
<dbReference type="PROSITE" id="PS51683">
    <property type="entry name" value="SAM_OMT_II"/>
    <property type="match status" value="1"/>
</dbReference>
<comment type="function">
    <text evidence="3">Involved in the biosynthesis of pyocyanine, a blue-pigmented phenazine derivative, which plays a role in virulence. Converts phenazine-1-carboxylate (PCA) to 5-methylphenazine-1-carboxylate (5-methyl-PCA).</text>
</comment>
<comment type="catalytic activity">
    <reaction evidence="3">
        <text>phenazine-1-carboxylate + S-adenosyl-L-methionine = 5-methyl-phenazine-1-carboxylate + S-adenosyl-L-homocysteine</text>
        <dbReference type="Rhea" id="RHEA:49112"/>
        <dbReference type="ChEBI" id="CHEBI:57856"/>
        <dbReference type="ChEBI" id="CHEBI:59789"/>
        <dbReference type="ChEBI" id="CHEBI:62221"/>
        <dbReference type="ChEBI" id="CHEBI:62248"/>
        <dbReference type="EC" id="2.1.1.327"/>
    </reaction>
</comment>
<comment type="activity regulation">
    <text evidence="3">In vitro, requires PhzS for activity.</text>
</comment>
<comment type="pathway">
    <text evidence="3">Secondary metabolite biosynthesis; pyocyanine biosynthesis.</text>
</comment>
<comment type="subunit">
    <text evidence="2 3">Homodimer in solution (PubMed:16946471, PubMed:17253782). Probably interacts transiently with PhzS (PubMed:17253782).</text>
</comment>
<comment type="domain">
    <text evidence="3">Contains an N-terminal dimerization domain. The C-terminal region contains the S-adenosyl-L-methionine binding site.</text>
</comment>
<comment type="similarity">
    <text evidence="1">Belongs to the class I-like SAM-binding methyltransferase superfamily. Cation-independent O-methyltransferase family.</text>
</comment>
<organism>
    <name type="scientific">Pseudomonas aeruginosa (strain ATCC 15692 / DSM 22644 / CIP 104116 / JCM 14847 / LMG 12228 / 1C / PRS 101 / PAO1)</name>
    <dbReference type="NCBI Taxonomy" id="208964"/>
    <lineage>
        <taxon>Bacteria</taxon>
        <taxon>Pseudomonadati</taxon>
        <taxon>Pseudomonadota</taxon>
        <taxon>Gammaproteobacteria</taxon>
        <taxon>Pseudomonadales</taxon>
        <taxon>Pseudomonadaceae</taxon>
        <taxon>Pseudomonas</taxon>
    </lineage>
</organism>
<keyword id="KW-0002">3D-structure</keyword>
<keyword id="KW-0489">Methyltransferase</keyword>
<keyword id="KW-1185">Reference proteome</keyword>
<keyword id="KW-0949">S-adenosyl-L-methionine</keyword>
<keyword id="KW-0808">Transferase</keyword>
<accession>Q9HWH2</accession>
<sequence>MNNSNLAAARNLIQVVTGEWKSRCVYVATRLGLADLIESGIDSDETLAAAVGSDAERIHRLMRLLVAFEIFQGDTRDGYANTPTSHLLRDVEGSFRDMVLFYGEEFHAAWTPACEALLSGTPGFELAFGEDFYSYLKRCPDAGRRFLLAMKASNLAFHEIPRLLDFRGRSFVDVGGGSGELTKAILQAEPSARGVMLDREGSLGVARDNLSSLLAGERVSLVGGDMLQEVPSNGDIYLLSRIIGDLDEAASLRLLGNCREAMAGDGRVVVIERTISASEPSPMSVLWDVHLFMACAGRHRTTEEVVDLLGRGGFAVERIVDLPMETRMIVAARA</sequence>
<name>PHZM_PSEAE</name>
<reference key="1">
    <citation type="journal article" date="2000" name="Nature">
        <title>Complete genome sequence of Pseudomonas aeruginosa PAO1, an opportunistic pathogen.</title>
        <authorList>
            <person name="Stover C.K."/>
            <person name="Pham X.-Q.T."/>
            <person name="Erwin A.L."/>
            <person name="Mizoguchi S.D."/>
            <person name="Warrener P."/>
            <person name="Hickey M.J."/>
            <person name="Brinkman F.S.L."/>
            <person name="Hufnagle W.O."/>
            <person name="Kowalik D.J."/>
            <person name="Lagrou M."/>
            <person name="Garber R.L."/>
            <person name="Goltry L."/>
            <person name="Tolentino E."/>
            <person name="Westbrock-Wadman S."/>
            <person name="Yuan Y."/>
            <person name="Brody L.L."/>
            <person name="Coulter S.N."/>
            <person name="Folger K.R."/>
            <person name="Kas A."/>
            <person name="Larbig K."/>
            <person name="Lim R.M."/>
            <person name="Smith K.A."/>
            <person name="Spencer D.H."/>
            <person name="Wong G.K.-S."/>
            <person name="Wu Z."/>
            <person name="Paulsen I.T."/>
            <person name="Reizer J."/>
            <person name="Saier M.H. Jr."/>
            <person name="Hancock R.E.W."/>
            <person name="Lory S."/>
            <person name="Olson M.V."/>
        </authorList>
    </citation>
    <scope>NUCLEOTIDE SEQUENCE [LARGE SCALE GENOMIC DNA]</scope>
    <source>
        <strain>ATCC 15692 / DSM 22644 / CIP 104116 / JCM 14847 / LMG 12228 / 1C / PRS 101 / PAO1</strain>
    </source>
</reference>
<reference key="2">
    <citation type="journal article" date="2006" name="Acta Crystallogr. F">
        <title>The purification, crystallization and preliminary structural characterization of PhzM, a phenazine-modifying methyltransferase from Pseudomonas aeruginosa.</title>
        <authorList>
            <person name="Gohain N."/>
            <person name="Thomashow L.S."/>
            <person name="Mavrodi D.V."/>
            <person name="Blankenfeldt W."/>
        </authorList>
    </citation>
    <scope>CRYSTALLIZATION</scope>
    <scope>SUBUNIT</scope>
</reference>
<reference evidence="7" key="3">
    <citation type="journal article" date="2007" name="Biochemistry">
        <title>Structural and functional analysis of the pyocyanin biosynthetic protein PhzM from Pseudomonas aeruginosa.</title>
        <authorList>
            <person name="Parsons J.F."/>
            <person name="Greenhagen B.T."/>
            <person name="Shi K."/>
            <person name="Calabrese K."/>
            <person name="Robinson H."/>
            <person name="Ladner J.E."/>
        </authorList>
    </citation>
    <scope>X-RAY CRYSTALLOGRAPHY (1.80 ANGSTROMS)</scope>
    <scope>FUNCTION</scope>
    <scope>CATALYTIC ACTIVITY</scope>
    <scope>ACTIVITY REGULATION</scope>
    <scope>PATHWAY</scope>
    <scope>SUBUNIT</scope>
    <scope>DOMAIN</scope>
</reference>
<proteinExistence type="evidence at protein level"/>
<evidence type="ECO:0000255" key="1">
    <source>
        <dbReference type="PROSITE-ProRule" id="PRU01020"/>
    </source>
</evidence>
<evidence type="ECO:0000269" key="2">
    <source>
    </source>
</evidence>
<evidence type="ECO:0000269" key="3">
    <source>
    </source>
</evidence>
<evidence type="ECO:0000303" key="4">
    <source>
    </source>
</evidence>
<evidence type="ECO:0000305" key="5"/>
<evidence type="ECO:0000312" key="6">
    <source>
        <dbReference type="EMBL" id="AAG07596.1"/>
    </source>
</evidence>
<evidence type="ECO:0007744" key="7">
    <source>
        <dbReference type="PDB" id="2IP2"/>
    </source>
</evidence>
<evidence type="ECO:0007829" key="8">
    <source>
        <dbReference type="PDB" id="2IP2"/>
    </source>
</evidence>